<sequence length="559" mass="63553">MRYIELAQLYQKLEKTTMKLIKTRLVADFLKKVPEDHLEFIPYLILGDVFPEWDERELGVGEKLLIKAVSMATGIDSKEIENSVKDTGDLGESIALAVKKRKQKSFFSQPLTIKRVYQTLVKVAETTGEGSQDKKMKYLANLFMDAEPIEAKYIARTVLGTMRTGVAEGLLRDAISLAFNVKVELVERAYMLTSDFGFVAKIAKTEGNDGLAKVTIQIGKPIKPMLAQQAANIKEALLEMGGEAEFEIKYDGARVQVHKDGEKVTIYSRRLENVTRAIPEIVEAIKEALKPTKAIVEGELVAIGEDGRPLPFQYVLRRFRRKYNIEEMMEKIPLELNLFDVLYVDGVSLIDTKFMERRKKLEEIVETNGKVKIAENLITKNVEEAEQFYKRALEMGHEGLMAKRLDAVYEPGNRGKKWLKIKPTMENLDLVIIGAEWGEGRRAHLLGSFILGAYDPETGEFLEVGKVGSGFTDDDLVEFTKMLKPLIIKEEGKRVWIQPKVVIEVTYQEIQKSPKYRSGFALRFPRYVALREDKGPEDADTIERIAQLYELQERMKGKV</sequence>
<dbReference type="EC" id="6.5.1.1" evidence="1"/>
<dbReference type="EMBL" id="AJ248284">
    <property type="protein sequence ID" value="CAB49465.1"/>
    <property type="molecule type" value="Genomic_DNA"/>
</dbReference>
<dbReference type="EMBL" id="HE613800">
    <property type="protein sequence ID" value="CCE69932.1"/>
    <property type="molecule type" value="Genomic_DNA"/>
</dbReference>
<dbReference type="PIR" id="B75173">
    <property type="entry name" value="B75173"/>
</dbReference>
<dbReference type="RefSeq" id="WP_010867667.1">
    <property type="nucleotide sequence ID" value="NC_000868.1"/>
</dbReference>
<dbReference type="SMR" id="P0CL75"/>
<dbReference type="STRING" id="272844.PAB2002"/>
<dbReference type="KEGG" id="pab:PAB2002"/>
<dbReference type="PATRIC" id="fig|272844.11.peg.578"/>
<dbReference type="eggNOG" id="arCOG01347">
    <property type="taxonomic scope" value="Archaea"/>
</dbReference>
<dbReference type="HOGENOM" id="CLU_005138_6_0_2"/>
<dbReference type="OrthoDB" id="31274at2157"/>
<dbReference type="PhylomeDB" id="P0CL75"/>
<dbReference type="Proteomes" id="UP000000810">
    <property type="component" value="Chromosome"/>
</dbReference>
<dbReference type="Proteomes" id="UP000009139">
    <property type="component" value="Chromosome"/>
</dbReference>
<dbReference type="GO" id="GO:0005524">
    <property type="term" value="F:ATP binding"/>
    <property type="evidence" value="ECO:0007669"/>
    <property type="project" value="UniProtKB-UniRule"/>
</dbReference>
<dbReference type="GO" id="GO:0003677">
    <property type="term" value="F:DNA binding"/>
    <property type="evidence" value="ECO:0007669"/>
    <property type="project" value="InterPro"/>
</dbReference>
<dbReference type="GO" id="GO:0003910">
    <property type="term" value="F:DNA ligase (ATP) activity"/>
    <property type="evidence" value="ECO:0007669"/>
    <property type="project" value="UniProtKB-UniRule"/>
</dbReference>
<dbReference type="GO" id="GO:0046872">
    <property type="term" value="F:metal ion binding"/>
    <property type="evidence" value="ECO:0007669"/>
    <property type="project" value="UniProtKB-KW"/>
</dbReference>
<dbReference type="GO" id="GO:0051301">
    <property type="term" value="P:cell division"/>
    <property type="evidence" value="ECO:0007669"/>
    <property type="project" value="UniProtKB-KW"/>
</dbReference>
<dbReference type="GO" id="GO:0071897">
    <property type="term" value="P:DNA biosynthetic process"/>
    <property type="evidence" value="ECO:0007669"/>
    <property type="project" value="InterPro"/>
</dbReference>
<dbReference type="GO" id="GO:0006310">
    <property type="term" value="P:DNA recombination"/>
    <property type="evidence" value="ECO:0007669"/>
    <property type="project" value="UniProtKB-UniRule"/>
</dbReference>
<dbReference type="GO" id="GO:0006281">
    <property type="term" value="P:DNA repair"/>
    <property type="evidence" value="ECO:0007669"/>
    <property type="project" value="UniProtKB-UniRule"/>
</dbReference>
<dbReference type="GO" id="GO:0006273">
    <property type="term" value="P:lagging strand elongation"/>
    <property type="evidence" value="ECO:0007669"/>
    <property type="project" value="TreeGrafter"/>
</dbReference>
<dbReference type="CDD" id="cd07901">
    <property type="entry name" value="Adenylation_DNA_ligase_Arch_LigB"/>
    <property type="match status" value="1"/>
</dbReference>
<dbReference type="CDD" id="cd07972">
    <property type="entry name" value="OBF_DNA_ligase_Arch_LigB"/>
    <property type="match status" value="1"/>
</dbReference>
<dbReference type="FunFam" id="1.10.3260.10:FF:000007">
    <property type="entry name" value="DNA ligase"/>
    <property type="match status" value="1"/>
</dbReference>
<dbReference type="FunFam" id="2.40.50.140:FF:000163">
    <property type="entry name" value="Probable DNA ligase"/>
    <property type="match status" value="1"/>
</dbReference>
<dbReference type="FunFam" id="3.30.470.30:FF:000012">
    <property type="entry name" value="Probable DNA ligase"/>
    <property type="match status" value="1"/>
</dbReference>
<dbReference type="Gene3D" id="1.10.3260.10">
    <property type="entry name" value="DNA ligase, ATP-dependent, N-terminal domain"/>
    <property type="match status" value="1"/>
</dbReference>
<dbReference type="Gene3D" id="3.30.470.30">
    <property type="entry name" value="DNA ligase/mRNA capping enzyme"/>
    <property type="match status" value="1"/>
</dbReference>
<dbReference type="Gene3D" id="2.40.50.140">
    <property type="entry name" value="Nucleic acid-binding proteins"/>
    <property type="match status" value="1"/>
</dbReference>
<dbReference type="HAMAP" id="MF_00407">
    <property type="entry name" value="DNA_ligase"/>
    <property type="match status" value="1"/>
</dbReference>
<dbReference type="InterPro" id="IPR050191">
    <property type="entry name" value="ATP-dep_DNA_ligase"/>
</dbReference>
<dbReference type="InterPro" id="IPR022865">
    <property type="entry name" value="DNA_ligae_ATP-dep_bac/arc"/>
</dbReference>
<dbReference type="InterPro" id="IPR000977">
    <property type="entry name" value="DNA_ligase_ATP-dep"/>
</dbReference>
<dbReference type="InterPro" id="IPR012309">
    <property type="entry name" value="DNA_ligase_ATP-dep_C"/>
</dbReference>
<dbReference type="InterPro" id="IPR012310">
    <property type="entry name" value="DNA_ligase_ATP-dep_cent"/>
</dbReference>
<dbReference type="InterPro" id="IPR016059">
    <property type="entry name" value="DNA_ligase_ATP-dep_CS"/>
</dbReference>
<dbReference type="InterPro" id="IPR012308">
    <property type="entry name" value="DNA_ligase_ATP-dep_N"/>
</dbReference>
<dbReference type="InterPro" id="IPR036599">
    <property type="entry name" value="DNA_ligase_N_sf"/>
</dbReference>
<dbReference type="InterPro" id="IPR012340">
    <property type="entry name" value="NA-bd_OB-fold"/>
</dbReference>
<dbReference type="NCBIfam" id="TIGR00574">
    <property type="entry name" value="dnl1"/>
    <property type="match status" value="1"/>
</dbReference>
<dbReference type="PANTHER" id="PTHR45674:SF7">
    <property type="entry name" value="DNA LIGASE"/>
    <property type="match status" value="1"/>
</dbReference>
<dbReference type="PANTHER" id="PTHR45674">
    <property type="entry name" value="DNA LIGASE 1/3 FAMILY MEMBER"/>
    <property type="match status" value="1"/>
</dbReference>
<dbReference type="Pfam" id="PF04679">
    <property type="entry name" value="DNA_ligase_A_C"/>
    <property type="match status" value="1"/>
</dbReference>
<dbReference type="Pfam" id="PF01068">
    <property type="entry name" value="DNA_ligase_A_M"/>
    <property type="match status" value="1"/>
</dbReference>
<dbReference type="Pfam" id="PF04675">
    <property type="entry name" value="DNA_ligase_A_N"/>
    <property type="match status" value="1"/>
</dbReference>
<dbReference type="SUPFAM" id="SSF117018">
    <property type="entry name" value="ATP-dependent DNA ligase DNA-binding domain"/>
    <property type="match status" value="1"/>
</dbReference>
<dbReference type="SUPFAM" id="SSF56091">
    <property type="entry name" value="DNA ligase/mRNA capping enzyme, catalytic domain"/>
    <property type="match status" value="1"/>
</dbReference>
<dbReference type="SUPFAM" id="SSF50249">
    <property type="entry name" value="Nucleic acid-binding proteins"/>
    <property type="match status" value="1"/>
</dbReference>
<dbReference type="PROSITE" id="PS00697">
    <property type="entry name" value="DNA_LIGASE_A1"/>
    <property type="match status" value="1"/>
</dbReference>
<dbReference type="PROSITE" id="PS00333">
    <property type="entry name" value="DNA_LIGASE_A2"/>
    <property type="match status" value="1"/>
</dbReference>
<dbReference type="PROSITE" id="PS50160">
    <property type="entry name" value="DNA_LIGASE_A3"/>
    <property type="match status" value="1"/>
</dbReference>
<organism>
    <name type="scientific">Pyrococcus abyssi (strain GE5 / Orsay)</name>
    <dbReference type="NCBI Taxonomy" id="272844"/>
    <lineage>
        <taxon>Archaea</taxon>
        <taxon>Methanobacteriati</taxon>
        <taxon>Methanobacteriota</taxon>
        <taxon>Thermococci</taxon>
        <taxon>Thermococcales</taxon>
        <taxon>Thermococcaceae</taxon>
        <taxon>Pyrococcus</taxon>
    </lineage>
</organism>
<evidence type="ECO:0000255" key="1">
    <source>
        <dbReference type="HAMAP-Rule" id="MF_00407"/>
    </source>
</evidence>
<keyword id="KW-0067">ATP-binding</keyword>
<keyword id="KW-0131">Cell cycle</keyword>
<keyword id="KW-0132">Cell division</keyword>
<keyword id="KW-0227">DNA damage</keyword>
<keyword id="KW-0233">DNA recombination</keyword>
<keyword id="KW-0234">DNA repair</keyword>
<keyword id="KW-0235">DNA replication</keyword>
<keyword id="KW-0436">Ligase</keyword>
<keyword id="KW-0460">Magnesium</keyword>
<keyword id="KW-0479">Metal-binding</keyword>
<keyword id="KW-0547">Nucleotide-binding</keyword>
<comment type="function">
    <text evidence="1">DNA ligase that seals nicks in double-stranded DNA during DNA replication, DNA recombination and DNA repair.</text>
</comment>
<comment type="catalytic activity">
    <reaction evidence="1">
        <text>ATP + (deoxyribonucleotide)n-3'-hydroxyl + 5'-phospho-(deoxyribonucleotide)m = (deoxyribonucleotide)n+m + AMP + diphosphate.</text>
        <dbReference type="EC" id="6.5.1.1"/>
    </reaction>
</comment>
<comment type="cofactor">
    <cofactor evidence="1">
        <name>Mg(2+)</name>
        <dbReference type="ChEBI" id="CHEBI:18420"/>
    </cofactor>
</comment>
<comment type="similarity">
    <text evidence="1">Belongs to the ATP-dependent DNA ligase family.</text>
</comment>
<protein>
    <recommendedName>
        <fullName evidence="1">DNA ligase</fullName>
        <ecNumber evidence="1">6.5.1.1</ecNumber>
    </recommendedName>
    <alternativeName>
        <fullName evidence="1">Polydeoxyribonucleotide synthase [ATP]</fullName>
    </alternativeName>
</protein>
<name>DNLI_PYRAB</name>
<gene>
    <name evidence="1" type="primary">lig</name>
    <name type="ordered locus">PYRAB05430</name>
    <name type="ORF">PAB2002</name>
</gene>
<proteinExistence type="inferred from homology"/>
<reference key="1">
    <citation type="journal article" date="2003" name="Mol. Microbiol.">
        <title>An integrated analysis of the genome of the hyperthermophilic archaeon Pyrococcus abyssi.</title>
        <authorList>
            <person name="Cohen G.N."/>
            <person name="Barbe V."/>
            <person name="Flament D."/>
            <person name="Galperin M."/>
            <person name="Heilig R."/>
            <person name="Lecompte O."/>
            <person name="Poch O."/>
            <person name="Prieur D."/>
            <person name="Querellou J."/>
            <person name="Ripp R."/>
            <person name="Thierry J.-C."/>
            <person name="Van der Oost J."/>
            <person name="Weissenbach J."/>
            <person name="Zivanovic Y."/>
            <person name="Forterre P."/>
        </authorList>
    </citation>
    <scope>NUCLEOTIDE SEQUENCE [LARGE SCALE GENOMIC DNA]</scope>
    <source>
        <strain>GE5 / Orsay</strain>
    </source>
</reference>
<reference key="2">
    <citation type="journal article" date="2012" name="Curr. Microbiol.">
        <title>Re-annotation of two hyperthermophilic archaea Pyrococcus abyssi GE5 and Pyrococcus furiosus DSM 3638.</title>
        <authorList>
            <person name="Gao J."/>
            <person name="Wang J."/>
        </authorList>
    </citation>
    <scope>GENOME REANNOTATION</scope>
    <source>
        <strain>GE5 / Orsay</strain>
    </source>
</reference>
<accession>P0CL75</accession>
<accession>G8ZGQ3</accession>
<accession>Q9HH10</accession>
<accession>Q9V185</accession>
<feature type="chain" id="PRO_0000407282" description="DNA ligase">
    <location>
        <begin position="1"/>
        <end position="559"/>
    </location>
</feature>
<feature type="active site" description="N6-AMP-lysine intermediate" evidence="1">
    <location>
        <position position="249"/>
    </location>
</feature>
<feature type="binding site" evidence="1">
    <location>
        <position position="247"/>
    </location>
    <ligand>
        <name>ATP</name>
        <dbReference type="ChEBI" id="CHEBI:30616"/>
    </ligand>
</feature>
<feature type="binding site" evidence="1">
    <location>
        <position position="254"/>
    </location>
    <ligand>
        <name>ATP</name>
        <dbReference type="ChEBI" id="CHEBI:30616"/>
    </ligand>
</feature>
<feature type="binding site" evidence="1">
    <location>
        <position position="269"/>
    </location>
    <ligand>
        <name>ATP</name>
        <dbReference type="ChEBI" id="CHEBI:30616"/>
    </ligand>
</feature>
<feature type="binding site" evidence="1">
    <location>
        <position position="299"/>
    </location>
    <ligand>
        <name>ATP</name>
        <dbReference type="ChEBI" id="CHEBI:30616"/>
    </ligand>
</feature>
<feature type="binding site" evidence="1">
    <location>
        <position position="339"/>
    </location>
    <ligand>
        <name>ATP</name>
        <dbReference type="ChEBI" id="CHEBI:30616"/>
    </ligand>
</feature>
<feature type="binding site" evidence="1">
    <location>
        <position position="414"/>
    </location>
    <ligand>
        <name>ATP</name>
        <dbReference type="ChEBI" id="CHEBI:30616"/>
    </ligand>
</feature>
<feature type="binding site" evidence="1">
    <location>
        <position position="420"/>
    </location>
    <ligand>
        <name>ATP</name>
        <dbReference type="ChEBI" id="CHEBI:30616"/>
    </ligand>
</feature>